<keyword id="KW-0027">Amidation</keyword>
<keyword id="KW-0903">Direct protein sequencing</keyword>
<keyword id="KW-0527">Neuropeptide</keyword>
<keyword id="KW-0964">Secreted</keyword>
<reference evidence="5" key="1">
    <citation type="journal article" date="2012" name="Syst. Biol.">
        <title>Peptidomics-based phylogeny and biogeography of Mantophasmatodea (Hexapoda).</title>
        <authorList>
            <person name="Predel R."/>
            <person name="Neupert S."/>
            <person name="Huetteroth W."/>
            <person name="Kahnt J."/>
            <person name="Waidelich D."/>
            <person name="Roth S."/>
        </authorList>
    </citation>
    <scope>PROTEIN SEQUENCE</scope>
    <scope>AMIDATION AT LEU-7</scope>
    <source>
        <tissue evidence="3">Corpora cardiaca</tissue>
    </source>
</reference>
<sequence length="7" mass="821">DGYTPRL</sequence>
<accession>B3A072</accession>
<organism>
    <name type="scientific">Karoophasma biedouwense</name>
    <name type="common">Gladiator</name>
    <name type="synonym">Heel-walker</name>
    <dbReference type="NCBI Taxonomy" id="253133"/>
    <lineage>
        <taxon>Eukaryota</taxon>
        <taxon>Metazoa</taxon>
        <taxon>Ecdysozoa</taxon>
        <taxon>Arthropoda</taxon>
        <taxon>Hexapoda</taxon>
        <taxon>Insecta</taxon>
        <taxon>Pterygota</taxon>
        <taxon>Neoptera</taxon>
        <taxon>Polyneoptera</taxon>
        <taxon>Mantophasmatodea</taxon>
        <taxon>Austrophasmatidae</taxon>
        <taxon>Karoophasma</taxon>
    </lineage>
</organism>
<proteinExistence type="evidence at protein level"/>
<comment type="function">
    <text evidence="1">Myoactive.</text>
</comment>
<comment type="subcellular location">
    <subcellularLocation>
        <location evidence="6">Secreted</location>
    </subcellularLocation>
</comment>
<comment type="similarity">
    <text evidence="2">Belongs to the pyrokinin family.</text>
</comment>
<evidence type="ECO:0000250" key="1">
    <source>
        <dbReference type="UniProtKB" id="P82619"/>
    </source>
</evidence>
<evidence type="ECO:0000255" key="2"/>
<evidence type="ECO:0000269" key="3">
    <source>
    </source>
</evidence>
<evidence type="ECO:0000303" key="4">
    <source>
    </source>
</evidence>
<evidence type="ECO:0000305" key="5"/>
<evidence type="ECO:0000305" key="6">
    <source>
    </source>
</evidence>
<feature type="peptide" id="PRO_0000421577" description="Pyrokinin-1" evidence="3">
    <location>
        <begin position="1"/>
        <end position="7"/>
    </location>
</feature>
<feature type="modified residue" description="Leucine amide" evidence="3">
    <location>
        <position position="7"/>
    </location>
</feature>
<name>PPK1_KARBI</name>
<dbReference type="GO" id="GO:0005576">
    <property type="term" value="C:extracellular region"/>
    <property type="evidence" value="ECO:0007669"/>
    <property type="project" value="UniProtKB-SubCell"/>
</dbReference>
<dbReference type="GO" id="GO:0007218">
    <property type="term" value="P:neuropeptide signaling pathway"/>
    <property type="evidence" value="ECO:0007669"/>
    <property type="project" value="UniProtKB-KW"/>
</dbReference>
<protein>
    <recommendedName>
        <fullName evidence="4">Pyrokinin-1</fullName>
        <shortName evidence="4">PK-1</shortName>
    </recommendedName>
    <alternativeName>
        <fullName evidence="1">YXPRL-amide</fullName>
    </alternativeName>
</protein>